<keyword id="KW-1185">Reference proteome</keyword>
<gene>
    <name type="ordered locus">ECU03_1620</name>
</gene>
<name>Y3G2_ENCCU</name>
<proteinExistence type="inferred from homology"/>
<feature type="chain" id="PRO_0000223121" description="UPF0328 protein ECU03_1620">
    <location>
        <begin position="1"/>
        <end position="261"/>
    </location>
</feature>
<sequence length="261" mass="29654">MDISCEIEECKTREQQNSKRSAKACWGTVFSDLGALMSIALPMLMYFTFTKNDFDTSPLLKVVMLLFPCSYSAAGYFLLCYSSRTAHHKTGILYHLLNVLLVTFAAISILSIIVLPIEKWSKRLLGVYSMPSSSFVVSLTYLLYTSCDLTTASFTDTGITAFVELLSLLFLMSYPIFLTRNPEYYPYLSIISAILILARSFKEKYFPNKKTSESVVRWRLLIFFVILGFTTFSYIMAGLSCLHIIKEKCENFAGNQQILNK</sequence>
<reference key="1">
    <citation type="journal article" date="2001" name="Nature">
        <title>Genome sequence and gene compaction of the eukaryote parasite Encephalitozoon cuniculi.</title>
        <authorList>
            <person name="Katinka M.D."/>
            <person name="Duprat S."/>
            <person name="Cornillot E."/>
            <person name="Metenier G."/>
            <person name="Thomarat F."/>
            <person name="Prensier G."/>
            <person name="Barbe V."/>
            <person name="Peyretaillade E."/>
            <person name="Brottier P."/>
            <person name="Wincker P."/>
            <person name="Delbac F."/>
            <person name="El Alaoui H."/>
            <person name="Peyret P."/>
            <person name="Saurin W."/>
            <person name="Gouy M."/>
            <person name="Weissenbach J."/>
            <person name="Vivares C.P."/>
        </authorList>
    </citation>
    <scope>NUCLEOTIDE SEQUENCE [LARGE SCALE GENOMIC DNA]</scope>
    <source>
        <strain>GB-M1</strain>
    </source>
</reference>
<comment type="similarity">
    <text evidence="1">Belongs to the UPF0328 family.</text>
</comment>
<organism>
    <name type="scientific">Encephalitozoon cuniculi (strain GB-M1)</name>
    <name type="common">Microsporidian parasite</name>
    <dbReference type="NCBI Taxonomy" id="284813"/>
    <lineage>
        <taxon>Eukaryota</taxon>
        <taxon>Fungi</taxon>
        <taxon>Fungi incertae sedis</taxon>
        <taxon>Microsporidia</taxon>
        <taxon>Unikaryonidae</taxon>
        <taxon>Encephalitozoon</taxon>
    </lineage>
</organism>
<protein>
    <recommendedName>
        <fullName>UPF0328 protein ECU03_1620</fullName>
    </recommendedName>
</protein>
<dbReference type="EMBL" id="AL590443">
    <property type="protein sequence ID" value="CAD26305.1"/>
    <property type="molecule type" value="Genomic_DNA"/>
</dbReference>
<dbReference type="RefSeq" id="NP_597670.1">
    <property type="nucleotide sequence ID" value="NM_001041034.1"/>
</dbReference>
<dbReference type="GeneID" id="858832"/>
<dbReference type="KEGG" id="ecu:ECU03_1620"/>
<dbReference type="VEuPathDB" id="MicrosporidiaDB:ECU03_1620"/>
<dbReference type="HOGENOM" id="CLU_059413_0_0_1"/>
<dbReference type="InParanoid" id="Q8SVY8"/>
<dbReference type="Proteomes" id="UP000000819">
    <property type="component" value="Chromosome III"/>
</dbReference>
<dbReference type="InterPro" id="IPR019081">
    <property type="entry name" value="UPF0328"/>
</dbReference>
<dbReference type="Pfam" id="PF09591">
    <property type="entry name" value="DUF2463"/>
    <property type="match status" value="1"/>
</dbReference>
<evidence type="ECO:0000305" key="1"/>
<accession>Q8SVY8</accession>